<gene>
    <name evidence="1" type="primary">rpmC</name>
    <name type="ordered locus">MMAR_1039</name>
</gene>
<accession>B2HSN9</accession>
<reference key="1">
    <citation type="journal article" date="2008" name="Genome Res.">
        <title>Insights from the complete genome sequence of Mycobacterium marinum on the evolution of Mycobacterium tuberculosis.</title>
        <authorList>
            <person name="Stinear T.P."/>
            <person name="Seemann T."/>
            <person name="Harrison P.F."/>
            <person name="Jenkin G.A."/>
            <person name="Davies J.K."/>
            <person name="Johnson P.D."/>
            <person name="Abdellah Z."/>
            <person name="Arrowsmith C."/>
            <person name="Chillingworth T."/>
            <person name="Churcher C."/>
            <person name="Clarke K."/>
            <person name="Cronin A."/>
            <person name="Davis P."/>
            <person name="Goodhead I."/>
            <person name="Holroyd N."/>
            <person name="Jagels K."/>
            <person name="Lord A."/>
            <person name="Moule S."/>
            <person name="Mungall K."/>
            <person name="Norbertczak H."/>
            <person name="Quail M.A."/>
            <person name="Rabbinowitsch E."/>
            <person name="Walker D."/>
            <person name="White B."/>
            <person name="Whitehead S."/>
            <person name="Small P.L."/>
            <person name="Brosch R."/>
            <person name="Ramakrishnan L."/>
            <person name="Fischbach M.A."/>
            <person name="Parkhill J."/>
            <person name="Cole S.T."/>
        </authorList>
    </citation>
    <scope>NUCLEOTIDE SEQUENCE [LARGE SCALE GENOMIC DNA]</scope>
    <source>
        <strain>ATCC BAA-535 / M</strain>
    </source>
</reference>
<keyword id="KW-1185">Reference proteome</keyword>
<keyword id="KW-0687">Ribonucleoprotein</keyword>
<keyword id="KW-0689">Ribosomal protein</keyword>
<evidence type="ECO:0000255" key="1">
    <source>
        <dbReference type="HAMAP-Rule" id="MF_00374"/>
    </source>
</evidence>
<evidence type="ECO:0000305" key="2"/>
<protein>
    <recommendedName>
        <fullName evidence="1">Large ribosomal subunit protein uL29</fullName>
    </recommendedName>
    <alternativeName>
        <fullName evidence="2">50S ribosomal protein L29</fullName>
    </alternativeName>
</protein>
<proteinExistence type="inferred from homology"/>
<organism>
    <name type="scientific">Mycobacterium marinum (strain ATCC BAA-535 / M)</name>
    <dbReference type="NCBI Taxonomy" id="216594"/>
    <lineage>
        <taxon>Bacteria</taxon>
        <taxon>Bacillati</taxon>
        <taxon>Actinomycetota</taxon>
        <taxon>Actinomycetes</taxon>
        <taxon>Mycobacteriales</taxon>
        <taxon>Mycobacteriaceae</taxon>
        <taxon>Mycobacterium</taxon>
        <taxon>Mycobacterium ulcerans group</taxon>
    </lineage>
</organism>
<dbReference type="EMBL" id="CP000854">
    <property type="protein sequence ID" value="ACC39497.1"/>
    <property type="molecule type" value="Genomic_DNA"/>
</dbReference>
<dbReference type="RefSeq" id="WP_011739065.1">
    <property type="nucleotide sequence ID" value="NC_010612.1"/>
</dbReference>
<dbReference type="SMR" id="B2HSN9"/>
<dbReference type="STRING" id="216594.MMAR_1039"/>
<dbReference type="GeneID" id="34339054"/>
<dbReference type="GeneID" id="93438592"/>
<dbReference type="KEGG" id="mmi:MMAR_1039"/>
<dbReference type="eggNOG" id="COG0255">
    <property type="taxonomic scope" value="Bacteria"/>
</dbReference>
<dbReference type="HOGENOM" id="CLU_158491_3_3_11"/>
<dbReference type="OrthoDB" id="9815192at2"/>
<dbReference type="Proteomes" id="UP000001190">
    <property type="component" value="Chromosome"/>
</dbReference>
<dbReference type="GO" id="GO:0022625">
    <property type="term" value="C:cytosolic large ribosomal subunit"/>
    <property type="evidence" value="ECO:0007669"/>
    <property type="project" value="TreeGrafter"/>
</dbReference>
<dbReference type="GO" id="GO:0003735">
    <property type="term" value="F:structural constituent of ribosome"/>
    <property type="evidence" value="ECO:0007669"/>
    <property type="project" value="InterPro"/>
</dbReference>
<dbReference type="GO" id="GO:0006412">
    <property type="term" value="P:translation"/>
    <property type="evidence" value="ECO:0007669"/>
    <property type="project" value="UniProtKB-UniRule"/>
</dbReference>
<dbReference type="CDD" id="cd00427">
    <property type="entry name" value="Ribosomal_L29_HIP"/>
    <property type="match status" value="1"/>
</dbReference>
<dbReference type="FunFam" id="1.10.287.310:FF:000001">
    <property type="entry name" value="50S ribosomal protein L29"/>
    <property type="match status" value="1"/>
</dbReference>
<dbReference type="Gene3D" id="1.10.287.310">
    <property type="match status" value="1"/>
</dbReference>
<dbReference type="HAMAP" id="MF_00374">
    <property type="entry name" value="Ribosomal_uL29"/>
    <property type="match status" value="1"/>
</dbReference>
<dbReference type="InterPro" id="IPR050063">
    <property type="entry name" value="Ribosomal_protein_uL29"/>
</dbReference>
<dbReference type="InterPro" id="IPR001854">
    <property type="entry name" value="Ribosomal_uL29"/>
</dbReference>
<dbReference type="InterPro" id="IPR018254">
    <property type="entry name" value="Ribosomal_uL29_CS"/>
</dbReference>
<dbReference type="InterPro" id="IPR036049">
    <property type="entry name" value="Ribosomal_uL29_sf"/>
</dbReference>
<dbReference type="NCBIfam" id="TIGR00012">
    <property type="entry name" value="L29"/>
    <property type="match status" value="1"/>
</dbReference>
<dbReference type="PANTHER" id="PTHR10916">
    <property type="entry name" value="60S RIBOSOMAL PROTEIN L35/50S RIBOSOMAL PROTEIN L29"/>
    <property type="match status" value="1"/>
</dbReference>
<dbReference type="PANTHER" id="PTHR10916:SF0">
    <property type="entry name" value="LARGE RIBOSOMAL SUBUNIT PROTEIN UL29C"/>
    <property type="match status" value="1"/>
</dbReference>
<dbReference type="Pfam" id="PF00831">
    <property type="entry name" value="Ribosomal_L29"/>
    <property type="match status" value="1"/>
</dbReference>
<dbReference type="SUPFAM" id="SSF46561">
    <property type="entry name" value="Ribosomal protein L29 (L29p)"/>
    <property type="match status" value="1"/>
</dbReference>
<dbReference type="PROSITE" id="PS00579">
    <property type="entry name" value="RIBOSOMAL_L29"/>
    <property type="match status" value="1"/>
</dbReference>
<sequence>MAVGISPGELRELTEEELTERLRESKEELFNLRFQMATGQLNNNRRLRTVRQEIARVYTVLRERELGLAAGPGEPDGKES</sequence>
<feature type="chain" id="PRO_1000121790" description="Large ribosomal subunit protein uL29">
    <location>
        <begin position="1"/>
        <end position="80"/>
    </location>
</feature>
<comment type="similarity">
    <text evidence="1">Belongs to the universal ribosomal protein uL29 family.</text>
</comment>
<name>RL29_MYCMM</name>